<dbReference type="EMBL" id="AE000516">
    <property type="protein sequence ID" value="AAK46134.1"/>
    <property type="molecule type" value="Genomic_DNA"/>
</dbReference>
<dbReference type="PIR" id="G70982">
    <property type="entry name" value="G70982"/>
</dbReference>
<dbReference type="RefSeq" id="WP_003409199.1">
    <property type="nucleotide sequence ID" value="NZ_KK341227.1"/>
</dbReference>
<dbReference type="SMR" id="P9WLS0"/>
<dbReference type="KEGG" id="mtc:MT1861"/>
<dbReference type="PATRIC" id="fig|83331.31.peg.2004"/>
<dbReference type="HOGENOM" id="CLU_150616_0_0_11"/>
<dbReference type="Proteomes" id="UP000001020">
    <property type="component" value="Chromosome"/>
</dbReference>
<dbReference type="InterPro" id="IPR025240">
    <property type="entry name" value="DUF4189"/>
</dbReference>
<dbReference type="Pfam" id="PF13827">
    <property type="entry name" value="DUF4189"/>
    <property type="match status" value="1"/>
</dbReference>
<gene>
    <name type="ordered locus">MT1861</name>
</gene>
<sequence length="143" mass="14981">MITNLRRRTAMAAAGLGAALGLGILLVPTVDAHLANGSMSEVMMSEIAGLPIPPIIHYGAIAYAPSGASGKAWHQRTPARAEQVALEKCGDKTCKVVSRFTRCGAVAYNGSKYQGGTGLTRRAAEDDAVNRLEGGRIVNWACN</sequence>
<accession>P9WLS0</accession>
<accession>L0TAP3</accession>
<accession>P64889</accession>
<accession>Q50620</accession>
<reference key="1">
    <citation type="journal article" date="2002" name="J. Bacteriol.">
        <title>Whole-genome comparison of Mycobacterium tuberculosis clinical and laboratory strains.</title>
        <authorList>
            <person name="Fleischmann R.D."/>
            <person name="Alland D."/>
            <person name="Eisen J.A."/>
            <person name="Carpenter L."/>
            <person name="White O."/>
            <person name="Peterson J.D."/>
            <person name="DeBoy R.T."/>
            <person name="Dodson R.J."/>
            <person name="Gwinn M.L."/>
            <person name="Haft D.H."/>
            <person name="Hickey E.K."/>
            <person name="Kolonay J.F."/>
            <person name="Nelson W.C."/>
            <person name="Umayam L.A."/>
            <person name="Ermolaeva M.D."/>
            <person name="Salzberg S.L."/>
            <person name="Delcher A."/>
            <person name="Utterback T.R."/>
            <person name="Weidman J.F."/>
            <person name="Khouri H.M."/>
            <person name="Gill J."/>
            <person name="Mikula A."/>
            <person name="Bishai W."/>
            <person name="Jacobs W.R. Jr."/>
            <person name="Venter J.C."/>
            <person name="Fraser C.M."/>
        </authorList>
    </citation>
    <scope>NUCLEOTIDE SEQUENCE [LARGE SCALE GENOMIC DNA]</scope>
    <source>
        <strain>CDC 1551 / Oshkosh</strain>
    </source>
</reference>
<reference key="2">
    <citation type="journal article" date="2003" name="J. Exp. Med.">
        <title>Inhibition of respiration by nitric oxide induces a Mycobacterium tuberculosis dormancy program.</title>
        <authorList>
            <person name="Voskuil M.I."/>
            <person name="Schnappinger D."/>
            <person name="Visconti K.C."/>
            <person name="Harrell M.I."/>
            <person name="Dolganov G.M."/>
            <person name="Sherman D.R."/>
            <person name="Schoolnik G.K."/>
        </authorList>
    </citation>
    <scope>INDUCTION BY NITRIC OXIDE (NO) AND BY HYPOXIA</scope>
    <scope>DORMANCY REGULON</scope>
    <source>
        <strain>CDC 1551 / Oshkosh</strain>
    </source>
</reference>
<evidence type="ECO:0000255" key="1"/>
<evidence type="ECO:0000269" key="2">
    <source>
    </source>
</evidence>
<evidence type="ECO:0000305" key="3"/>
<feature type="signal peptide" evidence="1">
    <location>
        <begin position="1"/>
        <end position="32"/>
    </location>
</feature>
<feature type="chain" id="PRO_0000427430" description="Uncharacterized protein MT1861">
    <location>
        <begin position="33"/>
        <end position="143"/>
    </location>
</feature>
<name>Y1813_MYCTO</name>
<proteinExistence type="evidence at transcript level"/>
<organism>
    <name type="scientific">Mycobacterium tuberculosis (strain CDC 1551 / Oshkosh)</name>
    <dbReference type="NCBI Taxonomy" id="83331"/>
    <lineage>
        <taxon>Bacteria</taxon>
        <taxon>Bacillati</taxon>
        <taxon>Actinomycetota</taxon>
        <taxon>Actinomycetes</taxon>
        <taxon>Mycobacteriales</taxon>
        <taxon>Mycobacteriaceae</taxon>
        <taxon>Mycobacterium</taxon>
        <taxon>Mycobacterium tuberculosis complex</taxon>
    </lineage>
</organism>
<keyword id="KW-1185">Reference proteome</keyword>
<keyword id="KW-0732">Signal</keyword>
<comment type="induction">
    <text evidence="2">A member of the dormancy regulon. Induced in response to reduced oxygen tension (hypoxia) and low levels of nitric oxide (NO).</text>
</comment>
<comment type="similarity">
    <text evidence="3">To M.tuberculosis Rv1269c.</text>
</comment>
<protein>
    <recommendedName>
        <fullName>Uncharacterized protein MT1861</fullName>
    </recommendedName>
</protein>